<organism>
    <name type="scientific">Buchnera aphidicola subsp. Acyrthosiphon pisum (strain APS)</name>
    <name type="common">Acyrthosiphon pisum symbiotic bacterium</name>
    <dbReference type="NCBI Taxonomy" id="107806"/>
    <lineage>
        <taxon>Bacteria</taxon>
        <taxon>Pseudomonadati</taxon>
        <taxon>Pseudomonadota</taxon>
        <taxon>Gammaproteobacteria</taxon>
        <taxon>Enterobacterales</taxon>
        <taxon>Erwiniaceae</taxon>
        <taxon>Buchnera</taxon>
    </lineage>
</organism>
<reference key="1">
    <citation type="journal article" date="2000" name="Nature">
        <title>Genome sequence of the endocellular bacterial symbiont of aphids Buchnera sp. APS.</title>
        <authorList>
            <person name="Shigenobu S."/>
            <person name="Watanabe H."/>
            <person name="Hattori M."/>
            <person name="Sakaki Y."/>
            <person name="Ishikawa H."/>
        </authorList>
    </citation>
    <scope>NUCLEOTIDE SEQUENCE [LARGE SCALE GENOMIC DNA]</scope>
    <source>
        <strain>APS</strain>
    </source>
</reference>
<proteinExistence type="inferred from homology"/>
<evidence type="ECO:0000255" key="1">
    <source>
        <dbReference type="HAMAP-Rule" id="MF_00075"/>
    </source>
</evidence>
<sequence length="72" mass="8377">MSKEENIEMQGVVIDTLPNTMFRVELENKHIVTAHISGKMRKNYIRILTGDKVTVELTPYDLTKGRIIFRSR</sequence>
<comment type="function">
    <text evidence="1">One of the essential components for the initiation of protein synthesis. Stabilizes the binding of IF-2 and IF-3 on the 30S subunit to which N-formylmethionyl-tRNA(fMet) subsequently binds. Helps modulate mRNA selection, yielding the 30S pre-initiation complex (PIC). Upon addition of the 50S ribosomal subunit IF-1, IF-2 and IF-3 are released leaving the mature 70S translation initiation complex.</text>
</comment>
<comment type="subunit">
    <text evidence="1">Component of the 30S ribosomal translation pre-initiation complex which assembles on the 30S ribosome in the order IF-2 and IF-3, IF-1 and N-formylmethionyl-tRNA(fMet); mRNA recruitment can occur at any time during PIC assembly.</text>
</comment>
<comment type="subcellular location">
    <subcellularLocation>
        <location evidence="1">Cytoplasm</location>
    </subcellularLocation>
</comment>
<comment type="similarity">
    <text evidence="1">Belongs to the IF-1 family.</text>
</comment>
<protein>
    <recommendedName>
        <fullName evidence="1">Translation initiation factor IF-1</fullName>
    </recommendedName>
</protein>
<dbReference type="EMBL" id="BA000003">
    <property type="protein sequence ID" value="BAB13023.1"/>
    <property type="molecule type" value="Genomic_DNA"/>
</dbReference>
<dbReference type="RefSeq" id="NP_240137.1">
    <property type="nucleotide sequence ID" value="NC_002528.1"/>
</dbReference>
<dbReference type="RefSeq" id="WP_009874269.1">
    <property type="nucleotide sequence ID" value="NZ_AP036055.1"/>
</dbReference>
<dbReference type="SMR" id="P57400"/>
<dbReference type="STRING" id="563178.BUAP5A_308"/>
<dbReference type="EnsemblBacteria" id="BAB13023">
    <property type="protein sequence ID" value="BAB13023"/>
    <property type="gene ID" value="BAB13023"/>
</dbReference>
<dbReference type="KEGG" id="buc:BU315"/>
<dbReference type="PATRIC" id="fig|107806.10.peg.327"/>
<dbReference type="eggNOG" id="COG0361">
    <property type="taxonomic scope" value="Bacteria"/>
</dbReference>
<dbReference type="HOGENOM" id="CLU_151267_1_0_6"/>
<dbReference type="Proteomes" id="UP000001806">
    <property type="component" value="Chromosome"/>
</dbReference>
<dbReference type="GO" id="GO:0005829">
    <property type="term" value="C:cytosol"/>
    <property type="evidence" value="ECO:0007669"/>
    <property type="project" value="TreeGrafter"/>
</dbReference>
<dbReference type="GO" id="GO:0043022">
    <property type="term" value="F:ribosome binding"/>
    <property type="evidence" value="ECO:0007669"/>
    <property type="project" value="UniProtKB-UniRule"/>
</dbReference>
<dbReference type="GO" id="GO:0019843">
    <property type="term" value="F:rRNA binding"/>
    <property type="evidence" value="ECO:0007669"/>
    <property type="project" value="UniProtKB-UniRule"/>
</dbReference>
<dbReference type="GO" id="GO:0003743">
    <property type="term" value="F:translation initiation factor activity"/>
    <property type="evidence" value="ECO:0007669"/>
    <property type="project" value="UniProtKB-UniRule"/>
</dbReference>
<dbReference type="CDD" id="cd04451">
    <property type="entry name" value="S1_IF1"/>
    <property type="match status" value="1"/>
</dbReference>
<dbReference type="FunFam" id="2.40.50.140:FF:000002">
    <property type="entry name" value="Translation initiation factor IF-1"/>
    <property type="match status" value="1"/>
</dbReference>
<dbReference type="Gene3D" id="2.40.50.140">
    <property type="entry name" value="Nucleic acid-binding proteins"/>
    <property type="match status" value="1"/>
</dbReference>
<dbReference type="HAMAP" id="MF_00075">
    <property type="entry name" value="IF_1"/>
    <property type="match status" value="1"/>
</dbReference>
<dbReference type="InterPro" id="IPR012340">
    <property type="entry name" value="NA-bd_OB-fold"/>
</dbReference>
<dbReference type="InterPro" id="IPR006196">
    <property type="entry name" value="RNA-binding_domain_S1_IF1"/>
</dbReference>
<dbReference type="InterPro" id="IPR003029">
    <property type="entry name" value="S1_domain"/>
</dbReference>
<dbReference type="InterPro" id="IPR004368">
    <property type="entry name" value="TIF_IF1"/>
</dbReference>
<dbReference type="NCBIfam" id="TIGR00008">
    <property type="entry name" value="infA"/>
    <property type="match status" value="1"/>
</dbReference>
<dbReference type="PANTHER" id="PTHR33370">
    <property type="entry name" value="TRANSLATION INITIATION FACTOR IF-1, CHLOROPLASTIC"/>
    <property type="match status" value="1"/>
</dbReference>
<dbReference type="PANTHER" id="PTHR33370:SF1">
    <property type="entry name" value="TRANSLATION INITIATION FACTOR IF-1, CHLOROPLASTIC"/>
    <property type="match status" value="1"/>
</dbReference>
<dbReference type="Pfam" id="PF01176">
    <property type="entry name" value="eIF-1a"/>
    <property type="match status" value="1"/>
</dbReference>
<dbReference type="SMART" id="SM00316">
    <property type="entry name" value="S1"/>
    <property type="match status" value="1"/>
</dbReference>
<dbReference type="SUPFAM" id="SSF50249">
    <property type="entry name" value="Nucleic acid-binding proteins"/>
    <property type="match status" value="1"/>
</dbReference>
<dbReference type="PROSITE" id="PS50832">
    <property type="entry name" value="S1_IF1_TYPE"/>
    <property type="match status" value="1"/>
</dbReference>
<name>IF1_BUCAI</name>
<gene>
    <name evidence="1" type="primary">infA</name>
    <name type="ordered locus">BU315</name>
</gene>
<accession>P57400</accession>
<keyword id="KW-0963">Cytoplasm</keyword>
<keyword id="KW-0396">Initiation factor</keyword>
<keyword id="KW-0648">Protein biosynthesis</keyword>
<keyword id="KW-1185">Reference proteome</keyword>
<keyword id="KW-0694">RNA-binding</keyword>
<keyword id="KW-0699">rRNA-binding</keyword>
<feature type="chain" id="PRO_0000095756" description="Translation initiation factor IF-1">
    <location>
        <begin position="1"/>
        <end position="72"/>
    </location>
</feature>
<feature type="domain" description="S1-like" evidence="1">
    <location>
        <begin position="1"/>
        <end position="72"/>
    </location>
</feature>